<accession>Q7Y001</accession>
<accession>Q0DPL4</accession>
<accession>Q10F40</accession>
<gene>
    <name type="primary">AGO12</name>
    <name type="ordered locus">Os03g0682200</name>
    <name type="ordered locus">LOC_Os03g47820</name>
    <name type="ORF">OSJNBb0070O09.6</name>
</gene>
<proteinExistence type="evidence at transcript level"/>
<keyword id="KW-1185">Reference proteome</keyword>
<keyword id="KW-0943">RNA-mediated gene silencing</keyword>
<name>AGO12_ORYSJ</name>
<protein>
    <recommendedName>
        <fullName>Protein argonaute 12</fullName>
        <shortName>OsAGO12</shortName>
    </recommendedName>
</protein>
<evidence type="ECO:0000250" key="1"/>
<evidence type="ECO:0000255" key="2">
    <source>
        <dbReference type="PROSITE-ProRule" id="PRU00142"/>
    </source>
</evidence>
<evidence type="ECO:0000255" key="3">
    <source>
        <dbReference type="PROSITE-ProRule" id="PRU00150"/>
    </source>
</evidence>
<evidence type="ECO:0000256" key="4">
    <source>
        <dbReference type="SAM" id="MobiDB-lite"/>
    </source>
</evidence>
<evidence type="ECO:0000305" key="5"/>
<dbReference type="EMBL" id="AC087412">
    <property type="protein sequence ID" value="AAP68386.1"/>
    <property type="status" value="ALT_SEQ"/>
    <property type="molecule type" value="Genomic_DNA"/>
</dbReference>
<dbReference type="EMBL" id="DP000009">
    <property type="protein sequence ID" value="ABF98225.1"/>
    <property type="status" value="ALT_SEQ"/>
    <property type="molecule type" value="Genomic_DNA"/>
</dbReference>
<dbReference type="EMBL" id="AP008209">
    <property type="protein sequence ID" value="BAF12824.2"/>
    <property type="status" value="ALT_SEQ"/>
    <property type="molecule type" value="Genomic_DNA"/>
</dbReference>
<dbReference type="EMBL" id="AP014959">
    <property type="status" value="NOT_ANNOTATED_CDS"/>
    <property type="molecule type" value="Genomic_DNA"/>
</dbReference>
<dbReference type="SMR" id="Q7Y001"/>
<dbReference type="FunCoup" id="Q7Y001">
    <property type="interactions" value="1890"/>
</dbReference>
<dbReference type="STRING" id="39947.Q7Y001"/>
<dbReference type="PaxDb" id="39947-Q7Y001"/>
<dbReference type="KEGG" id="dosa:Os03g0682200"/>
<dbReference type="eggNOG" id="KOG1041">
    <property type="taxonomic scope" value="Eukaryota"/>
</dbReference>
<dbReference type="InParanoid" id="Q7Y001"/>
<dbReference type="Proteomes" id="UP000000763">
    <property type="component" value="Chromosome 3"/>
</dbReference>
<dbReference type="Proteomes" id="UP000059680">
    <property type="component" value="Chromosome 3"/>
</dbReference>
<dbReference type="GO" id="GO:0005737">
    <property type="term" value="C:cytoplasm"/>
    <property type="evidence" value="ECO:0000318"/>
    <property type="project" value="GO_Central"/>
</dbReference>
<dbReference type="GO" id="GO:0005634">
    <property type="term" value="C:nucleus"/>
    <property type="evidence" value="ECO:0000318"/>
    <property type="project" value="GO_Central"/>
</dbReference>
<dbReference type="GO" id="GO:0003723">
    <property type="term" value="F:RNA binding"/>
    <property type="evidence" value="ECO:0000318"/>
    <property type="project" value="GO_Central"/>
</dbReference>
<dbReference type="GO" id="GO:0004521">
    <property type="term" value="F:RNA endonuclease activity"/>
    <property type="evidence" value="ECO:0000318"/>
    <property type="project" value="GO_Central"/>
</dbReference>
<dbReference type="GO" id="GO:0031047">
    <property type="term" value="P:regulatory ncRNA-mediated gene silencing"/>
    <property type="evidence" value="ECO:0000318"/>
    <property type="project" value="GO_Central"/>
</dbReference>
<dbReference type="CDD" id="cd02846">
    <property type="entry name" value="PAZ_argonaute_like"/>
    <property type="match status" value="1"/>
</dbReference>
<dbReference type="CDD" id="cd04657">
    <property type="entry name" value="Piwi_ago-like"/>
    <property type="match status" value="1"/>
</dbReference>
<dbReference type="FunFam" id="3.40.50.2300:FF:000110">
    <property type="entry name" value="Argonaute 10"/>
    <property type="match status" value="1"/>
</dbReference>
<dbReference type="FunFam" id="3.30.420.10:FF:000013">
    <property type="entry name" value="protein argonaute 10-like"/>
    <property type="match status" value="1"/>
</dbReference>
<dbReference type="Gene3D" id="3.40.50.2300">
    <property type="match status" value="1"/>
</dbReference>
<dbReference type="Gene3D" id="2.170.260.10">
    <property type="entry name" value="paz domain"/>
    <property type="match status" value="1"/>
</dbReference>
<dbReference type="Gene3D" id="3.30.420.10">
    <property type="entry name" value="Ribonuclease H-like superfamily/Ribonuclease H"/>
    <property type="match status" value="1"/>
</dbReference>
<dbReference type="InterPro" id="IPR014811">
    <property type="entry name" value="ArgoL1"/>
</dbReference>
<dbReference type="InterPro" id="IPR032472">
    <property type="entry name" value="ArgoL2"/>
</dbReference>
<dbReference type="InterPro" id="IPR032473">
    <property type="entry name" value="Argonaute_Mid_dom"/>
</dbReference>
<dbReference type="InterPro" id="IPR032474">
    <property type="entry name" value="Argonaute_N"/>
</dbReference>
<dbReference type="InterPro" id="IPR003100">
    <property type="entry name" value="PAZ_dom"/>
</dbReference>
<dbReference type="InterPro" id="IPR036085">
    <property type="entry name" value="PAZ_dom_sf"/>
</dbReference>
<dbReference type="InterPro" id="IPR003165">
    <property type="entry name" value="Piwi"/>
</dbReference>
<dbReference type="InterPro" id="IPR045246">
    <property type="entry name" value="Piwi_ago-like"/>
</dbReference>
<dbReference type="InterPro" id="IPR012337">
    <property type="entry name" value="RNaseH-like_sf"/>
</dbReference>
<dbReference type="InterPro" id="IPR036397">
    <property type="entry name" value="RNaseH_sf"/>
</dbReference>
<dbReference type="PANTHER" id="PTHR22891">
    <property type="entry name" value="EUKARYOTIC TRANSLATION INITIATION FACTOR 2C"/>
    <property type="match status" value="1"/>
</dbReference>
<dbReference type="Pfam" id="PF08699">
    <property type="entry name" value="ArgoL1"/>
    <property type="match status" value="1"/>
</dbReference>
<dbReference type="Pfam" id="PF16488">
    <property type="entry name" value="ArgoL2"/>
    <property type="match status" value="1"/>
</dbReference>
<dbReference type="Pfam" id="PF16487">
    <property type="entry name" value="ArgoMid"/>
    <property type="match status" value="1"/>
</dbReference>
<dbReference type="Pfam" id="PF16486">
    <property type="entry name" value="ArgoN"/>
    <property type="match status" value="1"/>
</dbReference>
<dbReference type="Pfam" id="PF02170">
    <property type="entry name" value="PAZ"/>
    <property type="match status" value="1"/>
</dbReference>
<dbReference type="Pfam" id="PF02171">
    <property type="entry name" value="Piwi"/>
    <property type="match status" value="1"/>
</dbReference>
<dbReference type="SMART" id="SM01163">
    <property type="entry name" value="DUF1785"/>
    <property type="match status" value="1"/>
</dbReference>
<dbReference type="SMART" id="SM00949">
    <property type="entry name" value="PAZ"/>
    <property type="match status" value="1"/>
</dbReference>
<dbReference type="SMART" id="SM00950">
    <property type="entry name" value="Piwi"/>
    <property type="match status" value="1"/>
</dbReference>
<dbReference type="SUPFAM" id="SSF101690">
    <property type="entry name" value="PAZ domain"/>
    <property type="match status" value="1"/>
</dbReference>
<dbReference type="SUPFAM" id="SSF53098">
    <property type="entry name" value="Ribonuclease H-like"/>
    <property type="match status" value="1"/>
</dbReference>
<dbReference type="PROSITE" id="PS50821">
    <property type="entry name" value="PAZ"/>
    <property type="match status" value="1"/>
</dbReference>
<dbReference type="PROSITE" id="PS50822">
    <property type="entry name" value="PIWI"/>
    <property type="match status" value="1"/>
</dbReference>
<organism>
    <name type="scientific">Oryza sativa subsp. japonica</name>
    <name type="common">Rice</name>
    <dbReference type="NCBI Taxonomy" id="39947"/>
    <lineage>
        <taxon>Eukaryota</taxon>
        <taxon>Viridiplantae</taxon>
        <taxon>Streptophyta</taxon>
        <taxon>Embryophyta</taxon>
        <taxon>Tracheophyta</taxon>
        <taxon>Spermatophyta</taxon>
        <taxon>Magnoliopsida</taxon>
        <taxon>Liliopsida</taxon>
        <taxon>Poales</taxon>
        <taxon>Poaceae</taxon>
        <taxon>BOP clade</taxon>
        <taxon>Oryzoideae</taxon>
        <taxon>Oryzeae</taxon>
        <taxon>Oryzinae</taxon>
        <taxon>Oryza</taxon>
        <taxon>Oryza sativa</taxon>
    </lineage>
</organism>
<reference key="1">
    <citation type="journal article" date="2005" name="Genome Res.">
        <title>Sequence, annotation, and analysis of synteny between rice chromosome 3 and diverged grass species.</title>
        <authorList>
            <consortium name="The rice chromosome 3 sequencing consortium"/>
            <person name="Buell C.R."/>
            <person name="Yuan Q."/>
            <person name="Ouyang S."/>
            <person name="Liu J."/>
            <person name="Zhu W."/>
            <person name="Wang A."/>
            <person name="Maiti R."/>
            <person name="Haas B."/>
            <person name="Wortman J."/>
            <person name="Pertea M."/>
            <person name="Jones K.M."/>
            <person name="Kim M."/>
            <person name="Overton L."/>
            <person name="Tsitrin T."/>
            <person name="Fadrosh D."/>
            <person name="Bera J."/>
            <person name="Weaver B."/>
            <person name="Jin S."/>
            <person name="Johri S."/>
            <person name="Reardon M."/>
            <person name="Webb K."/>
            <person name="Hill J."/>
            <person name="Moffat K."/>
            <person name="Tallon L."/>
            <person name="Van Aken S."/>
            <person name="Lewis M."/>
            <person name="Utterback T."/>
            <person name="Feldblyum T."/>
            <person name="Zismann V."/>
            <person name="Iobst S."/>
            <person name="Hsiao J."/>
            <person name="de Vazeille A.R."/>
            <person name="Salzberg S.L."/>
            <person name="White O."/>
            <person name="Fraser C.M."/>
            <person name="Yu Y."/>
            <person name="Kim H."/>
            <person name="Rambo T."/>
            <person name="Currie J."/>
            <person name="Collura K."/>
            <person name="Kernodle-Thompson S."/>
            <person name="Wei F."/>
            <person name="Kudrna K."/>
            <person name="Ammiraju J.S.S."/>
            <person name="Luo M."/>
            <person name="Goicoechea J.L."/>
            <person name="Wing R.A."/>
            <person name="Henry D."/>
            <person name="Oates R."/>
            <person name="Palmer M."/>
            <person name="Pries G."/>
            <person name="Saski C."/>
            <person name="Simmons J."/>
            <person name="Soderlund C."/>
            <person name="Nelson W."/>
            <person name="de la Bastide M."/>
            <person name="Spiegel L."/>
            <person name="Nascimento L."/>
            <person name="Huang E."/>
            <person name="Preston R."/>
            <person name="Zutavern T."/>
            <person name="Palmer L."/>
            <person name="O'Shaughnessy A."/>
            <person name="Dike S."/>
            <person name="McCombie W.R."/>
            <person name="Minx P."/>
            <person name="Cordum H."/>
            <person name="Wilson R."/>
            <person name="Jin W."/>
            <person name="Lee H.R."/>
            <person name="Jiang J."/>
            <person name="Jackson S."/>
        </authorList>
    </citation>
    <scope>NUCLEOTIDE SEQUENCE [LARGE SCALE GENOMIC DNA]</scope>
    <source>
        <strain>cv. Nipponbare</strain>
    </source>
</reference>
<reference key="2">
    <citation type="journal article" date="2005" name="Nature">
        <title>The map-based sequence of the rice genome.</title>
        <authorList>
            <consortium name="International rice genome sequencing project (IRGSP)"/>
        </authorList>
    </citation>
    <scope>NUCLEOTIDE SEQUENCE [LARGE SCALE GENOMIC DNA]</scope>
    <source>
        <strain>cv. Nipponbare</strain>
    </source>
</reference>
<reference key="3">
    <citation type="journal article" date="2008" name="Nucleic Acids Res.">
        <title>The rice annotation project database (RAP-DB): 2008 update.</title>
        <authorList>
            <consortium name="The rice annotation project (RAP)"/>
        </authorList>
    </citation>
    <scope>GENOME REANNOTATION</scope>
    <source>
        <strain>cv. Nipponbare</strain>
    </source>
</reference>
<reference key="4">
    <citation type="journal article" date="2013" name="Rice">
        <title>Improvement of the Oryza sativa Nipponbare reference genome using next generation sequence and optical map data.</title>
        <authorList>
            <person name="Kawahara Y."/>
            <person name="de la Bastide M."/>
            <person name="Hamilton J.P."/>
            <person name="Kanamori H."/>
            <person name="McCombie W.R."/>
            <person name="Ouyang S."/>
            <person name="Schwartz D.C."/>
            <person name="Tanaka T."/>
            <person name="Wu J."/>
            <person name="Zhou S."/>
            <person name="Childs K.L."/>
            <person name="Davidson R.M."/>
            <person name="Lin H."/>
            <person name="Quesada-Ocampo L."/>
            <person name="Vaillancourt B."/>
            <person name="Sakai H."/>
            <person name="Lee S.S."/>
            <person name="Kim J."/>
            <person name="Numa H."/>
            <person name="Itoh T."/>
            <person name="Buell C.R."/>
            <person name="Matsumoto T."/>
        </authorList>
    </citation>
    <scope>GENOME REANNOTATION</scope>
    <source>
        <strain>cv. Nipponbare</strain>
    </source>
</reference>
<reference key="5">
    <citation type="journal article" date="2008" name="BMC Genomics">
        <title>Genome-wide identification, organization and phylogenetic analysis of dicer-like, argonaute and RNA-dependent RNA polymerase gene families and their expression analysis during reproductive development and stress in rice.</title>
        <authorList>
            <person name="Kapoor M."/>
            <person name="Arora R."/>
            <person name="Lama T."/>
            <person name="Nijhawan A."/>
            <person name="Khurana J.P."/>
            <person name="Tyagi A.K."/>
            <person name="Kapoor S."/>
        </authorList>
    </citation>
    <scope>GENE FAMILY</scope>
    <scope>NOMENCLATURE</scope>
</reference>
<sequence length="1049" mass="115246">MSSRGGGGGGRRGGRGGGGGREGGGGGGGGGGRGGQGRGDLGVVGERQGGGRGAGERGGRHDAPRGRGGVAVGAGAGRQQQQPFHAPAPPSGGGGRGGVQVQPNAAARRPVGGGRGGVGVPAPAPAVAVGALCGEMKGKMVVSGGAPPAGQGSSLAAAQGTDNVKREPSQVAAPAPAPPPATLPPSSSKAVTFPARPDVGTIGRRCRVRANHFLVQVADKDIYHYDVVITPESTYRERNRSIINKLVALHKQFLDGRLPVYDGRKSIYTAGPLPFKTKDFVVKHINPLRGNQREEEYKVTIKQASKTDLYSLKQFLVGRQRELPQDTIQALDIALRECPTSVNFTCDRYVSISRSFFSQSFGHGGEIGSGTECWRGYYQSLRPTQMGLSLNIDISATAFYKAQPVMDFAVQYLNIRDVSRRLSDQDRIKLKKALKGVQIVATHWKEKSIRYKITGIPSAPMNELMFDLDGNRISVVQYFKKQYNYSLKHVNWPCLQAGSDSRPKYLPMEVCSILEGQRYSKKLNEHQVTNILRMTCERPAQRESSIIEIVNTNSYGNDDCAKEFGIKVANQLAVVDARVLPTPRLKYHDSGREKVCNPSVGQWNMINKRMVNGGCINHWTCLSFASRMHVNDIRMFCEDLVGMCNNIGMQMNTRPCVDIIQGQQRNIEGAIRNIHRQSSEKLDQQDLTGQQLQLLIVILTEISGSYGRIKRICETEVGVITQCCAPKSLQKGGKQYLENLALKMNVKVGGRNTVLEDALHKKIPILTDRPTIVFGADVTHPSPGEDASPSIAAVVASMDWPEVTKYKCLVSTQSHREEIISNLYTEVKDPLKGIIRGGMIRELLRSFYQETGQKPSRIIFYRDGISEGQFSQVLLYEMDAIRKACASLQEGYLPPVTFVVVQKRHHTRLFPENRRDMMDRSGNILPGTVVDTMICHPSEFDFYLCSHSGIKGTSRPTHYHVLLDENGFKADTLQTLTYNLSYTYARCTRAVSIVPPAYYAHLGAFRARYYMEDEHSDQGSSSSVTTRTDRSTKPLPEIKENVKRFMFYC</sequence>
<feature type="chain" id="PRO_0000378435" description="Protein argonaute 12">
    <location>
        <begin position="1"/>
        <end position="1049"/>
    </location>
</feature>
<feature type="domain" description="PAZ" evidence="2">
    <location>
        <begin position="404"/>
        <end position="515"/>
    </location>
</feature>
<feature type="domain" description="Piwi" evidence="3">
    <location>
        <begin position="694"/>
        <end position="1012"/>
    </location>
</feature>
<feature type="region of interest" description="Disordered" evidence="4">
    <location>
        <begin position="1"/>
        <end position="101"/>
    </location>
</feature>
<feature type="region of interest" description="Disordered" evidence="4">
    <location>
        <begin position="144"/>
        <end position="192"/>
    </location>
</feature>
<feature type="compositionally biased region" description="Gly residues" evidence="4">
    <location>
        <begin position="1"/>
        <end position="53"/>
    </location>
</feature>
<feature type="compositionally biased region" description="Basic and acidic residues" evidence="4">
    <location>
        <begin position="54"/>
        <end position="65"/>
    </location>
</feature>
<feature type="compositionally biased region" description="Gly residues" evidence="4">
    <location>
        <begin position="66"/>
        <end position="76"/>
    </location>
</feature>
<feature type="compositionally biased region" description="Low complexity" evidence="4">
    <location>
        <begin position="144"/>
        <end position="160"/>
    </location>
</feature>
<comment type="function">
    <text evidence="1">Probably involved in the RNA silencing pathway. May bind to short RNAs such as microRNAs (miRNAs) or short interfering RNAs (siRNAs), and represses the translation of mRNAs which are complementary to them (By similarity).</text>
</comment>
<comment type="similarity">
    <text evidence="5">Belongs to the argonaute family. Ago subfamily.</text>
</comment>
<comment type="sequence caution" evidence="5">
    <conflict type="erroneous gene model prediction">
        <sequence resource="EMBL-CDS" id="AAP68386"/>
    </conflict>
</comment>
<comment type="sequence caution" evidence="5">
    <conflict type="erroneous gene model prediction">
        <sequence resource="EMBL-CDS" id="ABF98225"/>
    </conflict>
</comment>
<comment type="sequence caution" evidence="5">
    <conflict type="erroneous gene model prediction">
        <sequence resource="EMBL-CDS" id="BAF12824"/>
    </conflict>
</comment>